<reference key="1">
    <citation type="journal article" date="2002" name="J. Bacteriol.">
        <title>Whole-genome comparison of Mycobacterium tuberculosis clinical and laboratory strains.</title>
        <authorList>
            <person name="Fleischmann R.D."/>
            <person name="Alland D."/>
            <person name="Eisen J.A."/>
            <person name="Carpenter L."/>
            <person name="White O."/>
            <person name="Peterson J.D."/>
            <person name="DeBoy R.T."/>
            <person name="Dodson R.J."/>
            <person name="Gwinn M.L."/>
            <person name="Haft D.H."/>
            <person name="Hickey E.K."/>
            <person name="Kolonay J.F."/>
            <person name="Nelson W.C."/>
            <person name="Umayam L.A."/>
            <person name="Ermolaeva M.D."/>
            <person name="Salzberg S.L."/>
            <person name="Delcher A."/>
            <person name="Utterback T.R."/>
            <person name="Weidman J.F."/>
            <person name="Khouri H.M."/>
            <person name="Gill J."/>
            <person name="Mikula A."/>
            <person name="Bishai W."/>
            <person name="Jacobs W.R. Jr."/>
            <person name="Venter J.C."/>
            <person name="Fraser C.M."/>
        </authorList>
    </citation>
    <scope>NUCLEOTIDE SEQUENCE [LARGE SCALE GENOMIC DNA]</scope>
    <source>
        <strain>CDC 1551 / Oshkosh</strain>
    </source>
</reference>
<accession>P9WQM8</accession>
<accession>L0TBF4</accession>
<accession>O33261</accession>
<comment type="subcellular location">
    <subcellularLocation>
        <location evidence="1">Cell membrane</location>
        <topology evidence="1">Multi-pass membrane protein</topology>
    </subcellularLocation>
</comment>
<comment type="similarity">
    <text evidence="3">Belongs to the amino acid-polyamine-organocation (APC) superfamily. Amino acid transporter (AAT) (TC 2.A.3.1) family.</text>
</comment>
<comment type="sequence caution" evidence="3">
    <conflict type="erroneous initiation">
        <sequence resource="EMBL-CDS" id="AAK46470"/>
    </conflict>
</comment>
<protein>
    <recommendedName>
        <fullName>L-asparagine permease 1</fullName>
    </recommendedName>
    <alternativeName>
        <fullName>L-asparagine transport protein 1</fullName>
    </alternativeName>
</protein>
<sequence>MSAASQRVGAFGEEAGYHKGLKPRQLQMIGIGGAIGTGLFLGAGGRLAKAGPGLFLVYGVCGVFVFLILRALGELVLHRPSSGSFVSYAREFFGEKAAYAVGWMYFLHWAMTSIVDTTAIATYLQRWTIFTVVPQWILALIALTVVLSMNLISVEWFGELEFWAALIKVLALMAFLVVGTVFLAGRYPVDGHSTGLSLWNNHGGLFPTSWLPLLIVTSGVVFAYSAVELVGTAAGETAEPEKIMPRAINSVVARIAIFYVGSVALLALLLPYTAYKAGESPFVTFFSKIGFHGAGDLMNIVVLTAALSSLNAGLYSTGRVMHSIAMSGSAPRFTARMSKSGVPYGGIVLTAVITLFGVALNAFKPGEAFEIVLNMSALGIIAGWATIVLCQLRLHKLANAGIMQRPRFRMPFSPYSGYLTLLFLLVVLVTMASDKPIGTWTVATLIIVIPALTAGWYLVRKRVMAVARERLGHTGPFPAVANPPVRSRD</sequence>
<organism>
    <name type="scientific">Mycobacterium tuberculosis (strain CDC 1551 / Oshkosh)</name>
    <dbReference type="NCBI Taxonomy" id="83331"/>
    <lineage>
        <taxon>Bacteria</taxon>
        <taxon>Bacillati</taxon>
        <taxon>Actinomycetota</taxon>
        <taxon>Actinomycetes</taxon>
        <taxon>Mycobacteriales</taxon>
        <taxon>Mycobacteriaceae</taxon>
        <taxon>Mycobacterium</taxon>
        <taxon>Mycobacterium tuberculosis complex</taxon>
    </lineage>
</organism>
<name>ANSP1_MYCTO</name>
<proteinExistence type="inferred from homology"/>
<gene>
    <name type="primary">ansP1</name>
    <name type="synonym">ansP</name>
    <name type="ordered locus">MT2186</name>
</gene>
<feature type="chain" id="PRO_0000426748" description="L-asparagine permease 1">
    <location>
        <begin position="1"/>
        <end position="489"/>
    </location>
</feature>
<feature type="transmembrane region" description="Helical" evidence="2">
    <location>
        <begin position="25"/>
        <end position="45"/>
    </location>
</feature>
<feature type="transmembrane region" description="Helical" evidence="2">
    <location>
        <begin position="49"/>
        <end position="69"/>
    </location>
</feature>
<feature type="transmembrane region" description="Helical" evidence="2">
    <location>
        <begin position="100"/>
        <end position="120"/>
    </location>
</feature>
<feature type="transmembrane region" description="Helical" evidence="2">
    <location>
        <begin position="137"/>
        <end position="157"/>
    </location>
</feature>
<feature type="transmembrane region" description="Helical" evidence="2">
    <location>
        <begin position="162"/>
        <end position="182"/>
    </location>
</feature>
<feature type="transmembrane region" description="Helical" evidence="2">
    <location>
        <begin position="210"/>
        <end position="230"/>
    </location>
</feature>
<feature type="transmembrane region" description="Helical" evidence="2">
    <location>
        <begin position="255"/>
        <end position="275"/>
    </location>
</feature>
<feature type="transmembrane region" description="Helical" evidence="2">
    <location>
        <begin position="289"/>
        <end position="309"/>
    </location>
</feature>
<feature type="transmembrane region" description="Helical" evidence="2">
    <location>
        <begin position="344"/>
        <end position="364"/>
    </location>
</feature>
<feature type="transmembrane region" description="Helical" evidence="2">
    <location>
        <begin position="369"/>
        <end position="389"/>
    </location>
</feature>
<feature type="transmembrane region" description="Helical" evidence="2">
    <location>
        <begin position="413"/>
        <end position="433"/>
    </location>
</feature>
<feature type="transmembrane region" description="Helical" evidence="2">
    <location>
        <begin position="439"/>
        <end position="459"/>
    </location>
</feature>
<keyword id="KW-0029">Amino-acid transport</keyword>
<keyword id="KW-1003">Cell membrane</keyword>
<keyword id="KW-0472">Membrane</keyword>
<keyword id="KW-1185">Reference proteome</keyword>
<keyword id="KW-0812">Transmembrane</keyword>
<keyword id="KW-1133">Transmembrane helix</keyword>
<keyword id="KW-0813">Transport</keyword>
<dbReference type="EMBL" id="AE000516">
    <property type="protein sequence ID" value="AAK46470.1"/>
    <property type="status" value="ALT_INIT"/>
    <property type="molecule type" value="Genomic_DNA"/>
</dbReference>
<dbReference type="PIR" id="B70514">
    <property type="entry name" value="B70514"/>
</dbReference>
<dbReference type="RefSeq" id="WP_003899182.1">
    <property type="nucleotide sequence ID" value="NZ_KK341227.1"/>
</dbReference>
<dbReference type="SMR" id="P9WQM8"/>
<dbReference type="KEGG" id="mtc:MT2186"/>
<dbReference type="PATRIC" id="fig|83331.31.peg.2357"/>
<dbReference type="HOGENOM" id="CLU_007946_9_0_11"/>
<dbReference type="Proteomes" id="UP000001020">
    <property type="component" value="Chromosome"/>
</dbReference>
<dbReference type="GO" id="GO:0005886">
    <property type="term" value="C:plasma membrane"/>
    <property type="evidence" value="ECO:0007669"/>
    <property type="project" value="UniProtKB-SubCell"/>
</dbReference>
<dbReference type="GO" id="GO:0006865">
    <property type="term" value="P:amino acid transport"/>
    <property type="evidence" value="ECO:0007669"/>
    <property type="project" value="UniProtKB-KW"/>
</dbReference>
<dbReference type="GO" id="GO:0055085">
    <property type="term" value="P:transmembrane transport"/>
    <property type="evidence" value="ECO:0007669"/>
    <property type="project" value="InterPro"/>
</dbReference>
<dbReference type="FunFam" id="1.20.1740.10:FF:000001">
    <property type="entry name" value="Amino acid permease"/>
    <property type="match status" value="1"/>
</dbReference>
<dbReference type="Gene3D" id="1.20.1740.10">
    <property type="entry name" value="Amino acid/polyamine transporter I"/>
    <property type="match status" value="1"/>
</dbReference>
<dbReference type="InterPro" id="IPR004841">
    <property type="entry name" value="AA-permease/SLC12A_dom"/>
</dbReference>
<dbReference type="InterPro" id="IPR004840">
    <property type="entry name" value="Amino_acid_permease_CS"/>
</dbReference>
<dbReference type="PANTHER" id="PTHR43495">
    <property type="entry name" value="GABA PERMEASE"/>
    <property type="match status" value="1"/>
</dbReference>
<dbReference type="PANTHER" id="PTHR43495:SF1">
    <property type="entry name" value="L-ASPARAGINE PERMEASE"/>
    <property type="match status" value="1"/>
</dbReference>
<dbReference type="Pfam" id="PF00324">
    <property type="entry name" value="AA_permease"/>
    <property type="match status" value="1"/>
</dbReference>
<dbReference type="PIRSF" id="PIRSF006060">
    <property type="entry name" value="AA_transporter"/>
    <property type="match status" value="1"/>
</dbReference>
<dbReference type="PROSITE" id="PS00218">
    <property type="entry name" value="AMINO_ACID_PERMEASE_1"/>
    <property type="match status" value="1"/>
</dbReference>
<evidence type="ECO:0000250" key="1"/>
<evidence type="ECO:0000255" key="2"/>
<evidence type="ECO:0000305" key="3"/>